<gene>
    <name type="primary">S3</name>
</gene>
<evidence type="ECO:0000250" key="1">
    <source>
        <dbReference type="UniProtKB" id="P15024"/>
    </source>
</evidence>
<evidence type="ECO:0000255" key="2">
    <source>
        <dbReference type="PROSITE-ProRule" id="PRU00042"/>
    </source>
</evidence>
<evidence type="ECO:0000256" key="3">
    <source>
        <dbReference type="SAM" id="MobiDB-lite"/>
    </source>
</evidence>
<evidence type="ECO:0000269" key="4">
    <source>
    </source>
</evidence>
<evidence type="ECO:0000305" key="5"/>
<proteinExistence type="evidence at protein level"/>
<reference key="1">
    <citation type="journal article" date="2008" name="Virology">
        <title>Complete characterisation of the American grass carp reovirus genome (genus Aquareovirus: family Reoviridae) reveals an evolutionary link between aquareoviruses and coltiviruses.</title>
        <authorList>
            <person name="Mohd Jaafar F."/>
            <person name="Goodwin A.E."/>
            <person name="Belhouchet M."/>
            <person name="Merry G."/>
            <person name="Fang Q."/>
            <person name="Cantaloube J.F."/>
            <person name="Biagini P."/>
            <person name="de Micco P."/>
            <person name="Mertens P.P."/>
            <person name="Attoui H."/>
        </authorList>
    </citation>
    <scope>NUCLEOTIDE SEQUENCE [GENOMIC RNA]</scope>
</reference>
<reference key="2">
    <citation type="journal article" date="2008" name="J. Mol. Biol.">
        <title>Subnanometer-resolution structures of the grass carp reovirus core and virion.</title>
        <authorList>
            <person name="Cheng L."/>
            <person name="Fang Q."/>
            <person name="Shah S."/>
            <person name="Atanasov I.C."/>
            <person name="Zhou Z.H."/>
        </authorList>
    </citation>
    <scope>FUNCTION</scope>
    <scope>INTERACTION WITH VP6</scope>
    <source>
        <strain>GCRV</strain>
    </source>
</reference>
<name>CAPSD_AQRVG</name>
<accession>B2BNE1</accession>
<feature type="chain" id="PRO_0000404170" description="Inner capsid protein VP3">
    <location>
        <begin position="1"/>
        <end position="1215"/>
    </location>
</feature>
<feature type="zinc finger region" description="C2H2-type" evidence="2">
    <location>
        <begin position="118"/>
        <end position="141"/>
    </location>
</feature>
<feature type="region of interest" description="Disordered" evidence="3">
    <location>
        <begin position="1"/>
        <end position="81"/>
    </location>
</feature>
<feature type="compositionally biased region" description="Low complexity" evidence="3">
    <location>
        <begin position="21"/>
        <end position="44"/>
    </location>
</feature>
<keyword id="KW-0067">ATP-binding</keyword>
<keyword id="KW-0167">Capsid protein</keyword>
<keyword id="KW-0347">Helicase</keyword>
<keyword id="KW-0378">Hydrolase</keyword>
<keyword id="KW-1153">Inner capsid protein</keyword>
<keyword id="KW-0479">Metal-binding</keyword>
<keyword id="KW-0506">mRNA capping</keyword>
<keyword id="KW-0507">mRNA processing</keyword>
<keyword id="KW-0547">Nucleotide-binding</keyword>
<keyword id="KW-1185">Reference proteome</keyword>
<keyword id="KW-1141">T=2 icosahedral capsid protein</keyword>
<keyword id="KW-0946">Virion</keyword>
<keyword id="KW-0862">Zinc</keyword>
<keyword id="KW-0863">Zinc-finger</keyword>
<protein>
    <recommendedName>
        <fullName>Inner capsid protein VP3</fullName>
    </recommendedName>
    <alternativeName>
        <fullName>ATP-dependent DNA helicase VP3</fullName>
    </alternativeName>
</protein>
<organismHost>
    <name type="scientific">Ctenopharyngodon idella</name>
    <name type="common">Grass carp</name>
    <name type="synonym">Leuciscus idella</name>
    <dbReference type="NCBI Taxonomy" id="7959"/>
</organismHost>
<sequence>MPRRPRRNAKTSDKAEDAQTLVAPAANASVSSTVNTTTSPTLAAGNESQQRAGIDPNQAGSAGVGDAAPSSRVDNDGDVITRPTSDSIAAIANATKPAAVINNAQATALVPTSNPHAYRCNVCNAEFPSMSAMTEHLRTSHRDEPSTLLATPVINAAIQAFLQAWDGLRLLAPDVSSEALSKYLDSTVDSSPDLIVEDQGLCTSFMLIDNVPASHLSPELIGFTWFMQMYQMTPPLPEGAVNRIVCMTNWASLGDPSRGIEVRLPPPTDNTVHAYKTVLSQGYVASSQFSPLTFRANTLLMLTQFVLSNLKINKSSTFTSDVTTLTVGRMICSFEARPELLALAYPGRAVLPVNTKNAQFLATAIPDRIGRIDRANLIGGEVSASVECMELCDSLTLYIRENYLMLLRSMHQDPTRIVQIVNECARNLLNSSIPVNLRPSILCPWFASTADLRLQQAIHLVNISSNTAAALPQVEALSSLLRSVTPLVLNPTILTNAITTISESTTQTISPISEILRLLSPTGNDYAAFWKCIASWAYNGLVQTVLSEDAFPDSSQSITHLPSMWKCMLLTLAAPMTSDPHSPVKVFMSLANLLAQPEPIVINVDGMHQTTPASQFSHPGVWPPGFINPAQIPVAQAPLLRAFADHIHANWPQPSDFEYGSAAQGSGNLFIPPNRMVYPWPNAPLPRMTVAATFDSAMSQWISTTIAFFIRVVNAPIMAPTVNDLTRRTITGVLTAMRQVKTMTPFYIQHMCPTELAVLGSITLVPPFQVPFTRLVQNDAITNVLVARVDPTQRGDAAVDIRATHATFSAALPVDPASIVVAMLCGQTPTNLIPSHHYGKAFAPLFTSNAMFTRNQRAVITREALVCARSIVAQCQDDGFNVPRPLAGLRQFDITSAAAAEIWHAVNDAFKTAFDIDGALLDGMGLYGDPRIADISVAYLQYDGRVTREHVPPDQSFIHRALLTTENTFLAEMNLFNVGAGDIFLIQTPTNGNWAPMVPVAHPPFARGGPNVNVVGNHGTLAMRPNGLEPQLIDNAGVPRDIAGDWIYPIDVLQVSVSTFRDYVWPLVVAGRVRVRIEIPHYVYTTHYHQPQTTFTDAQLVETWLAGIDPTGIPPIPFSIPIPQVGACITSRRVYHVFAAQNNNNSLFSTNSSSIATVFGEDAGVSPARWPALVDPNYQFGTNELPNRITLYGSLFRYNFTYPSLSGVMFMRSAE</sequence>
<comment type="function">
    <text evidence="1">Inner capsid protein that self-assembles to form an icosahedral capsid with a T=2 symmetry, which consists of 120 copies of VP2, with channels at each of its five-fold vertices. This capsid constitutes the innermost concentric layer of the viral mature particle.</text>
</comment>
<comment type="subunit">
    <text evidence="1 4">Homodecamer; each decamer is made up of two conformers of VP2, called VP2A and VP2B (By similarity). 12 homodecamers assemble to form an icosahedral capsid (By similarity). Interacts with VP6 (PubMed:18625243).</text>
</comment>
<comment type="subcellular location">
    <subcellularLocation>
        <location evidence="1">Virion</location>
    </subcellularLocation>
    <text evidence="1">Found in the inner capsid (120 copies).</text>
</comment>
<comment type="similarity">
    <text evidence="5">Belongs to the turreted BTV-fold inner capsid family.</text>
</comment>
<dbReference type="EMBL" id="EF589100">
    <property type="protein sequence ID" value="ABV01041.1"/>
    <property type="molecule type" value="Genomic_RNA"/>
</dbReference>
<dbReference type="RefSeq" id="YP_001837096.1">
    <property type="nucleotide sequence ID" value="NC_010586.1"/>
</dbReference>
<dbReference type="SMR" id="B2BNE1"/>
<dbReference type="KEGG" id="vg:6218801"/>
<dbReference type="Proteomes" id="UP000001674">
    <property type="component" value="Genome"/>
</dbReference>
<dbReference type="GO" id="GO:0039616">
    <property type="term" value="C:T=2 icosahedral viral capsid"/>
    <property type="evidence" value="ECO:0007669"/>
    <property type="project" value="UniProtKB-KW"/>
</dbReference>
<dbReference type="GO" id="GO:0039625">
    <property type="term" value="C:viral inner capsid"/>
    <property type="evidence" value="ECO:0007669"/>
    <property type="project" value="UniProtKB-KW"/>
</dbReference>
<dbReference type="GO" id="GO:0005524">
    <property type="term" value="F:ATP binding"/>
    <property type="evidence" value="ECO:0007669"/>
    <property type="project" value="UniProtKB-KW"/>
</dbReference>
<dbReference type="GO" id="GO:0016787">
    <property type="term" value="F:hydrolase activity"/>
    <property type="evidence" value="ECO:0007669"/>
    <property type="project" value="UniProtKB-KW"/>
</dbReference>
<dbReference type="GO" id="GO:0003724">
    <property type="term" value="F:RNA helicase activity"/>
    <property type="evidence" value="ECO:0007669"/>
    <property type="project" value="UniProtKB-EC"/>
</dbReference>
<dbReference type="GO" id="GO:0008270">
    <property type="term" value="F:zinc ion binding"/>
    <property type="evidence" value="ECO:0007669"/>
    <property type="project" value="UniProtKB-KW"/>
</dbReference>
<dbReference type="GO" id="GO:0006370">
    <property type="term" value="P:7-methylguanosine mRNA capping"/>
    <property type="evidence" value="ECO:0007669"/>
    <property type="project" value="UniProtKB-KW"/>
</dbReference>
<dbReference type="Gene3D" id="3.90.1830.10">
    <property type="entry name" value="Inner capsid protein lambda-1"/>
    <property type="match status" value="1"/>
</dbReference>
<dbReference type="InterPro" id="IPR054176">
    <property type="entry name" value="Lamba1_VP3"/>
</dbReference>
<dbReference type="InterPro" id="IPR044949">
    <property type="entry name" value="Lambda-1/VP3_sf"/>
</dbReference>
<dbReference type="InterPro" id="IPR013087">
    <property type="entry name" value="Znf_C2H2_type"/>
</dbReference>
<dbReference type="Pfam" id="PF22033">
    <property type="entry name" value="Lamba1_VP3"/>
    <property type="match status" value="1"/>
</dbReference>
<dbReference type="Pfam" id="PF13912">
    <property type="entry name" value="zf-C2H2_6"/>
    <property type="match status" value="1"/>
</dbReference>
<dbReference type="SMART" id="SM00355">
    <property type="entry name" value="ZnF_C2H2"/>
    <property type="match status" value="1"/>
</dbReference>
<dbReference type="PROSITE" id="PS00028">
    <property type="entry name" value="ZINC_FINGER_C2H2_1"/>
    <property type="match status" value="1"/>
</dbReference>
<dbReference type="PROSITE" id="PS50157">
    <property type="entry name" value="ZINC_FINGER_C2H2_2"/>
    <property type="match status" value="1"/>
</dbReference>
<organism>
    <name type="scientific">Aquareovirus G (isolate American grass carp/USA/PB01-155/-)</name>
    <name type="common">AQRV-G</name>
    <dbReference type="NCBI Taxonomy" id="648234"/>
    <lineage>
        <taxon>Viruses</taxon>
        <taxon>Riboviria</taxon>
        <taxon>Orthornavirae</taxon>
        <taxon>Duplornaviricota</taxon>
        <taxon>Resentoviricetes</taxon>
        <taxon>Reovirales</taxon>
        <taxon>Spinareoviridae</taxon>
        <taxon>Aquareovirus</taxon>
        <taxon>Aquareovirus graminis</taxon>
    </lineage>
</organism>